<name>MEPA_ECO27</name>
<reference key="1">
    <citation type="journal article" date="2009" name="J. Bacteriol.">
        <title>Complete genome sequence and comparative genome analysis of enteropathogenic Escherichia coli O127:H6 strain E2348/69.</title>
        <authorList>
            <person name="Iguchi A."/>
            <person name="Thomson N.R."/>
            <person name="Ogura Y."/>
            <person name="Saunders D."/>
            <person name="Ooka T."/>
            <person name="Henderson I.R."/>
            <person name="Harris D."/>
            <person name="Asadulghani M."/>
            <person name="Kurokawa K."/>
            <person name="Dean P."/>
            <person name="Kenny B."/>
            <person name="Quail M.A."/>
            <person name="Thurston S."/>
            <person name="Dougan G."/>
            <person name="Hayashi T."/>
            <person name="Parkhill J."/>
            <person name="Frankel G."/>
        </authorList>
    </citation>
    <scope>NUCLEOTIDE SEQUENCE [LARGE SCALE GENOMIC DNA]</scope>
    <source>
        <strain>E2348/69 / EPEC</strain>
    </source>
</reference>
<dbReference type="EC" id="3.4.24.-" evidence="1"/>
<dbReference type="EMBL" id="FM180568">
    <property type="protein sequence ID" value="CAS10016.1"/>
    <property type="molecule type" value="Genomic_DNA"/>
</dbReference>
<dbReference type="RefSeq" id="WP_001043802.1">
    <property type="nucleotide sequence ID" value="NC_011601.1"/>
</dbReference>
<dbReference type="SMR" id="B7UFY6"/>
<dbReference type="MEROPS" id="M74.001"/>
<dbReference type="KEGG" id="ecg:E2348C_2468"/>
<dbReference type="HOGENOM" id="CLU_052496_0_0_6"/>
<dbReference type="Proteomes" id="UP000008205">
    <property type="component" value="Chromosome"/>
</dbReference>
<dbReference type="GO" id="GO:0030288">
    <property type="term" value="C:outer membrane-bounded periplasmic space"/>
    <property type="evidence" value="ECO:0007669"/>
    <property type="project" value="InterPro"/>
</dbReference>
<dbReference type="GO" id="GO:0046872">
    <property type="term" value="F:metal ion binding"/>
    <property type="evidence" value="ECO:0007669"/>
    <property type="project" value="UniProtKB-KW"/>
</dbReference>
<dbReference type="GO" id="GO:0004222">
    <property type="term" value="F:metalloendopeptidase activity"/>
    <property type="evidence" value="ECO:0007669"/>
    <property type="project" value="UniProtKB-UniRule"/>
</dbReference>
<dbReference type="GO" id="GO:0004252">
    <property type="term" value="F:serine-type endopeptidase activity"/>
    <property type="evidence" value="ECO:0007669"/>
    <property type="project" value="InterPro"/>
</dbReference>
<dbReference type="GO" id="GO:0000270">
    <property type="term" value="P:peptidoglycan metabolic process"/>
    <property type="evidence" value="ECO:0007669"/>
    <property type="project" value="UniProtKB-UniRule"/>
</dbReference>
<dbReference type="GO" id="GO:0006508">
    <property type="term" value="P:proteolysis"/>
    <property type="evidence" value="ECO:0007669"/>
    <property type="project" value="UniProtKB-KW"/>
</dbReference>
<dbReference type="FunFam" id="3.30.1380.10:FF:000002">
    <property type="entry name" value="Penicillin-insensitive murein endopeptidase"/>
    <property type="match status" value="1"/>
</dbReference>
<dbReference type="Gene3D" id="3.30.1380.10">
    <property type="match status" value="1"/>
</dbReference>
<dbReference type="HAMAP" id="MF_01623">
    <property type="entry name" value="MepA"/>
    <property type="match status" value="1"/>
</dbReference>
<dbReference type="InterPro" id="IPR009045">
    <property type="entry name" value="Hedgehog_sig/DD-Pept_Zn-bd_sf"/>
</dbReference>
<dbReference type="InterPro" id="IPR005073">
    <property type="entry name" value="Peptidase_M74"/>
</dbReference>
<dbReference type="NCBIfam" id="NF006947">
    <property type="entry name" value="PRK09429.1"/>
    <property type="match status" value="1"/>
</dbReference>
<dbReference type="Pfam" id="PF03411">
    <property type="entry name" value="Peptidase_M74"/>
    <property type="match status" value="1"/>
</dbReference>
<dbReference type="PIRSF" id="PIRSF018455">
    <property type="entry name" value="MepA"/>
    <property type="match status" value="1"/>
</dbReference>
<dbReference type="SUPFAM" id="SSF55166">
    <property type="entry name" value="Hedgehog/DD-peptidase"/>
    <property type="match status" value="1"/>
</dbReference>
<proteinExistence type="inferred from homology"/>
<organism>
    <name type="scientific">Escherichia coli O127:H6 (strain E2348/69 / EPEC)</name>
    <dbReference type="NCBI Taxonomy" id="574521"/>
    <lineage>
        <taxon>Bacteria</taxon>
        <taxon>Pseudomonadati</taxon>
        <taxon>Pseudomonadota</taxon>
        <taxon>Gammaproteobacteria</taxon>
        <taxon>Enterobacterales</taxon>
        <taxon>Enterobacteriaceae</taxon>
        <taxon>Escherichia</taxon>
    </lineage>
</organism>
<sequence>MNKTAIALLALLASSASLAATPWQKITQPVPGSAQSIGSFSNGCIVGADTLPIQSEHYQVMRTDQRRYFGHPDLVMFIQRLSRQVSNLGMGTVLIGDMGMPAGGRFNGGHASHQTGLDVDIFLQLPKTRWTSAQLLRPQALDLVSRDGKHVVPALWKPEIFSLIKLAAQDKDVTRIFVNPAIKQQLCLDAGTDRDWLRKVRPWFQHRAHMHVRLRCPADSLECEDQPLPPPGDGCGAELQSWFEPPKPGTTKPEKKTPPPLPPSCQALLDEHVI</sequence>
<gene>
    <name evidence="1" type="primary">mepA</name>
    <name type="ordered locus">E2348C_2468</name>
</gene>
<feature type="signal peptide" evidence="1">
    <location>
        <begin position="1"/>
        <end position="19"/>
    </location>
</feature>
<feature type="chain" id="PRO_1000186092" description="Penicillin-insensitive murein endopeptidase">
    <location>
        <begin position="20"/>
        <end position="274"/>
    </location>
</feature>
<feature type="region of interest" description="Disordered" evidence="2">
    <location>
        <begin position="227"/>
        <end position="274"/>
    </location>
</feature>
<feature type="binding site" evidence="1">
    <location>
        <position position="110"/>
    </location>
    <ligand>
        <name>Zn(2+)</name>
        <dbReference type="ChEBI" id="CHEBI:29105"/>
        <label>1</label>
    </ligand>
</feature>
<feature type="binding site" evidence="1">
    <location>
        <position position="113"/>
    </location>
    <ligand>
        <name>Zn(2+)</name>
        <dbReference type="ChEBI" id="CHEBI:29105"/>
        <label>1</label>
    </ligand>
</feature>
<feature type="binding site" evidence="1">
    <location>
        <position position="120"/>
    </location>
    <ligand>
        <name>Zn(2+)</name>
        <dbReference type="ChEBI" id="CHEBI:29105"/>
        <label>1</label>
    </ligand>
</feature>
<feature type="binding site" evidence="1">
    <location>
        <position position="147"/>
    </location>
    <ligand>
        <name>Zn(2+)</name>
        <dbReference type="ChEBI" id="CHEBI:29105"/>
        <label>2</label>
    </ligand>
</feature>
<feature type="binding site" evidence="1">
    <location>
        <position position="150"/>
    </location>
    <ligand>
        <name>Zn(2+)</name>
        <dbReference type="ChEBI" id="CHEBI:29105"/>
        <label>2</label>
    </ligand>
</feature>
<feature type="binding site" evidence="1">
    <location>
        <position position="211"/>
    </location>
    <ligand>
        <name>Zn(2+)</name>
        <dbReference type="ChEBI" id="CHEBI:29105"/>
        <label>1</label>
    </ligand>
</feature>
<feature type="disulfide bond" evidence="1">
    <location>
        <begin position="44"/>
        <end position="265"/>
    </location>
</feature>
<feature type="disulfide bond" evidence="1">
    <location>
        <begin position="187"/>
        <end position="235"/>
    </location>
</feature>
<feature type="disulfide bond" evidence="1">
    <location>
        <begin position="216"/>
        <end position="223"/>
    </location>
</feature>
<protein>
    <recommendedName>
        <fullName evidence="1">Penicillin-insensitive murein endopeptidase</fullName>
        <ecNumber evidence="1">3.4.24.-</ecNumber>
    </recommendedName>
    <alternativeName>
        <fullName evidence="1">D-alanyl-D-alanine-endopeptidase</fullName>
        <shortName evidence="1">DD-endopeptidase</shortName>
    </alternativeName>
</protein>
<accession>B7UFY6</accession>
<evidence type="ECO:0000255" key="1">
    <source>
        <dbReference type="HAMAP-Rule" id="MF_01623"/>
    </source>
</evidence>
<evidence type="ECO:0000256" key="2">
    <source>
        <dbReference type="SAM" id="MobiDB-lite"/>
    </source>
</evidence>
<comment type="function">
    <text evidence="1">Murein endopeptidase that cleaves the D-alanyl-meso-2,6-diamino-pimelyl amide bond that connects peptidoglycan strands. Likely plays a role in the removal of murein from the sacculus.</text>
</comment>
<comment type="cofactor">
    <cofactor evidence="1">
        <name>Zn(2+)</name>
        <dbReference type="ChEBI" id="CHEBI:29105"/>
    </cofactor>
    <text evidence="1">Binds 2 Zn(2+) ions per subunit. Zn(2+) ion 1 is bound in the active site. Zn(2+) ion 2 is bound at the dimer interface by residues from both subunits.</text>
</comment>
<comment type="subunit">
    <text evidence="1">Dimer.</text>
</comment>
<comment type="subcellular location">
    <subcellularLocation>
        <location evidence="1">Periplasm</location>
    </subcellularLocation>
</comment>
<comment type="similarity">
    <text evidence="1">Belongs to the peptidase M74 family.</text>
</comment>
<keyword id="KW-1015">Disulfide bond</keyword>
<keyword id="KW-0378">Hydrolase</keyword>
<keyword id="KW-0479">Metal-binding</keyword>
<keyword id="KW-0482">Metalloprotease</keyword>
<keyword id="KW-0574">Periplasm</keyword>
<keyword id="KW-0645">Protease</keyword>
<keyword id="KW-1185">Reference proteome</keyword>
<keyword id="KW-0732">Signal</keyword>
<keyword id="KW-0862">Zinc</keyword>